<name>GCSPA_CHLTE</name>
<organism>
    <name type="scientific">Chlorobaculum tepidum (strain ATCC 49652 / DSM 12025 / NBRC 103806 / TLS)</name>
    <name type="common">Chlorobium tepidum</name>
    <dbReference type="NCBI Taxonomy" id="194439"/>
    <lineage>
        <taxon>Bacteria</taxon>
        <taxon>Pseudomonadati</taxon>
        <taxon>Chlorobiota</taxon>
        <taxon>Chlorobiia</taxon>
        <taxon>Chlorobiales</taxon>
        <taxon>Chlorobiaceae</taxon>
        <taxon>Chlorobaculum</taxon>
    </lineage>
</organism>
<gene>
    <name evidence="1" type="primary">gcvPA</name>
    <name type="synonym">gcvP1</name>
    <name type="ordered locus">CT1625</name>
</gene>
<accession>Q8KC05</accession>
<protein>
    <recommendedName>
        <fullName evidence="1">Probable glycine dehydrogenase (decarboxylating) subunit 1</fullName>
        <ecNumber evidence="1">1.4.4.2</ecNumber>
    </recommendedName>
    <alternativeName>
        <fullName evidence="1">Glycine cleavage system P-protein subunit 1</fullName>
    </alternativeName>
    <alternativeName>
        <fullName evidence="1">Glycine decarboxylase subunit 1</fullName>
    </alternativeName>
    <alternativeName>
        <fullName evidence="1">Glycine dehydrogenase (aminomethyl-transferring) subunit 1</fullName>
    </alternativeName>
</protein>
<sequence length="444" mass="47739">MPFIVNTDAERAEMLREIGVENFEALIADIPEEIRLKKALDLFPAMGEPEVKSLLEKMASGNAATCDHVSFLGAGAYDHFIPSAVKTIASRSEFYTAYTPYQAEVSQGTLQAIYEYQSVMCRLYGMDVANASMYDGASALAEAALIALNVTGRNGIVVAGKLHPYTSQVLETYLEAAGDRSIVQNGLENGIGSVEALEALVSSETAAVIVQQPNFYGCLEEVEAIGEIARKNGALFIVSADPVSLGVLEAPGNYGADIAVGEGQSVGNAQSFGGPYLGILTVKQAHVRKIPGRLVGMTKDKDGNDGFILTLQTREQHIRREKATSNICSNQALCALQSVVHLSLLGKEGIRDVANRSMQKAHYLADRIAELPGYSMKFSAPFFREFVVETPVPSATIIEKMLEKKVFAGVDLSAWGEDGLLVAVTEKRTKEELDSFVSELAALG</sequence>
<proteinExistence type="inferred from homology"/>
<dbReference type="EC" id="1.4.4.2" evidence="1"/>
<dbReference type="EMBL" id="AE006470">
    <property type="protein sequence ID" value="AAM72850.1"/>
    <property type="molecule type" value="Genomic_DNA"/>
</dbReference>
<dbReference type="RefSeq" id="NP_662508.1">
    <property type="nucleotide sequence ID" value="NC_002932.3"/>
</dbReference>
<dbReference type="RefSeq" id="WP_010933289.1">
    <property type="nucleotide sequence ID" value="NC_002932.3"/>
</dbReference>
<dbReference type="SMR" id="Q8KC05"/>
<dbReference type="STRING" id="194439.CT1625"/>
<dbReference type="EnsemblBacteria" id="AAM72850">
    <property type="protein sequence ID" value="AAM72850"/>
    <property type="gene ID" value="CT1625"/>
</dbReference>
<dbReference type="KEGG" id="cte:CT1625"/>
<dbReference type="PATRIC" id="fig|194439.7.peg.1467"/>
<dbReference type="eggNOG" id="COG0403">
    <property type="taxonomic scope" value="Bacteria"/>
</dbReference>
<dbReference type="HOGENOM" id="CLU_004620_0_2_10"/>
<dbReference type="OrthoDB" id="9801272at2"/>
<dbReference type="Proteomes" id="UP000001007">
    <property type="component" value="Chromosome"/>
</dbReference>
<dbReference type="GO" id="GO:0004375">
    <property type="term" value="F:glycine dehydrogenase (decarboxylating) activity"/>
    <property type="evidence" value="ECO:0007669"/>
    <property type="project" value="UniProtKB-EC"/>
</dbReference>
<dbReference type="GO" id="GO:0019464">
    <property type="term" value="P:glycine decarboxylation via glycine cleavage system"/>
    <property type="evidence" value="ECO:0007669"/>
    <property type="project" value="UniProtKB-UniRule"/>
</dbReference>
<dbReference type="GO" id="GO:0009116">
    <property type="term" value="P:nucleoside metabolic process"/>
    <property type="evidence" value="ECO:0007669"/>
    <property type="project" value="InterPro"/>
</dbReference>
<dbReference type="CDD" id="cd00613">
    <property type="entry name" value="GDC-P"/>
    <property type="match status" value="1"/>
</dbReference>
<dbReference type="Gene3D" id="3.90.1150.10">
    <property type="entry name" value="Aspartate Aminotransferase, domain 1"/>
    <property type="match status" value="1"/>
</dbReference>
<dbReference type="Gene3D" id="3.40.640.10">
    <property type="entry name" value="Type I PLP-dependent aspartate aminotransferase-like (Major domain)"/>
    <property type="match status" value="1"/>
</dbReference>
<dbReference type="HAMAP" id="MF_00712">
    <property type="entry name" value="GcvPA"/>
    <property type="match status" value="1"/>
</dbReference>
<dbReference type="InterPro" id="IPR023010">
    <property type="entry name" value="GcvPA"/>
</dbReference>
<dbReference type="InterPro" id="IPR049315">
    <property type="entry name" value="GDC-P_N"/>
</dbReference>
<dbReference type="InterPro" id="IPR020581">
    <property type="entry name" value="GDC_P"/>
</dbReference>
<dbReference type="InterPro" id="IPR015424">
    <property type="entry name" value="PyrdxlP-dep_Trfase"/>
</dbReference>
<dbReference type="InterPro" id="IPR015421">
    <property type="entry name" value="PyrdxlP-dep_Trfase_major"/>
</dbReference>
<dbReference type="InterPro" id="IPR015422">
    <property type="entry name" value="PyrdxlP-dep_Trfase_small"/>
</dbReference>
<dbReference type="NCBIfam" id="NF001696">
    <property type="entry name" value="PRK00451.1"/>
    <property type="match status" value="1"/>
</dbReference>
<dbReference type="PANTHER" id="PTHR42806">
    <property type="entry name" value="GLYCINE CLEAVAGE SYSTEM P-PROTEIN"/>
    <property type="match status" value="1"/>
</dbReference>
<dbReference type="PANTHER" id="PTHR42806:SF1">
    <property type="entry name" value="GLYCINE DEHYDROGENASE (DECARBOXYLATING)"/>
    <property type="match status" value="1"/>
</dbReference>
<dbReference type="Pfam" id="PF02347">
    <property type="entry name" value="GDC-P"/>
    <property type="match status" value="1"/>
</dbReference>
<dbReference type="PIRSF" id="PIRSF006815">
    <property type="entry name" value="GcvPA"/>
    <property type="match status" value="1"/>
</dbReference>
<dbReference type="SUPFAM" id="SSF53383">
    <property type="entry name" value="PLP-dependent transferases"/>
    <property type="match status" value="1"/>
</dbReference>
<feature type="chain" id="PRO_0000166963" description="Probable glycine dehydrogenase (decarboxylating) subunit 1">
    <location>
        <begin position="1"/>
        <end position="444"/>
    </location>
</feature>
<evidence type="ECO:0000255" key="1">
    <source>
        <dbReference type="HAMAP-Rule" id="MF_00712"/>
    </source>
</evidence>
<reference key="1">
    <citation type="journal article" date="2002" name="Proc. Natl. Acad. Sci. U.S.A.">
        <title>The complete genome sequence of Chlorobium tepidum TLS, a photosynthetic, anaerobic, green-sulfur bacterium.</title>
        <authorList>
            <person name="Eisen J.A."/>
            <person name="Nelson K.E."/>
            <person name="Paulsen I.T."/>
            <person name="Heidelberg J.F."/>
            <person name="Wu M."/>
            <person name="Dodson R.J."/>
            <person name="DeBoy R.T."/>
            <person name="Gwinn M.L."/>
            <person name="Nelson W.C."/>
            <person name="Haft D.H."/>
            <person name="Hickey E.K."/>
            <person name="Peterson J.D."/>
            <person name="Durkin A.S."/>
            <person name="Kolonay J.F."/>
            <person name="Yang F."/>
            <person name="Holt I.E."/>
            <person name="Umayam L.A."/>
            <person name="Mason T.M."/>
            <person name="Brenner M."/>
            <person name="Shea T.P."/>
            <person name="Parksey D.S."/>
            <person name="Nierman W.C."/>
            <person name="Feldblyum T.V."/>
            <person name="Hansen C.L."/>
            <person name="Craven M.B."/>
            <person name="Radune D."/>
            <person name="Vamathevan J.J."/>
            <person name="Khouri H.M."/>
            <person name="White O."/>
            <person name="Gruber T.M."/>
            <person name="Ketchum K.A."/>
            <person name="Venter J.C."/>
            <person name="Tettelin H."/>
            <person name="Bryant D.A."/>
            <person name="Fraser C.M."/>
        </authorList>
    </citation>
    <scope>NUCLEOTIDE SEQUENCE [LARGE SCALE GENOMIC DNA]</scope>
    <source>
        <strain>ATCC 49652 / DSM 12025 / NBRC 103806 / TLS</strain>
    </source>
</reference>
<keyword id="KW-0560">Oxidoreductase</keyword>
<keyword id="KW-1185">Reference proteome</keyword>
<comment type="function">
    <text evidence="1">The glycine cleavage system catalyzes the degradation of glycine. The P protein binds the alpha-amino group of glycine through its pyridoxal phosphate cofactor; CO(2) is released and the remaining methylamine moiety is then transferred to the lipoamide cofactor of the H protein.</text>
</comment>
<comment type="catalytic activity">
    <reaction evidence="1">
        <text>N(6)-[(R)-lipoyl]-L-lysyl-[glycine-cleavage complex H protein] + glycine + H(+) = N(6)-[(R)-S(8)-aminomethyldihydrolipoyl]-L-lysyl-[glycine-cleavage complex H protein] + CO2</text>
        <dbReference type="Rhea" id="RHEA:24304"/>
        <dbReference type="Rhea" id="RHEA-COMP:10494"/>
        <dbReference type="Rhea" id="RHEA-COMP:10495"/>
        <dbReference type="ChEBI" id="CHEBI:15378"/>
        <dbReference type="ChEBI" id="CHEBI:16526"/>
        <dbReference type="ChEBI" id="CHEBI:57305"/>
        <dbReference type="ChEBI" id="CHEBI:83099"/>
        <dbReference type="ChEBI" id="CHEBI:83143"/>
        <dbReference type="EC" id="1.4.4.2"/>
    </reaction>
</comment>
<comment type="subunit">
    <text evidence="1">The glycine cleavage system is composed of four proteins: P, T, L and H. In this organism, the P 'protein' is a heterodimer of two subunits.</text>
</comment>
<comment type="similarity">
    <text evidence="1">Belongs to the GcvP family. N-terminal subunit subfamily.</text>
</comment>